<keyword id="KW-1185">Reference proteome</keyword>
<keyword id="KW-0687">Ribonucleoprotein</keyword>
<keyword id="KW-0689">Ribosomal protein</keyword>
<comment type="function">
    <text evidence="1">This protein is located at the 30S-50S ribosomal subunit interface and may play a role in the structure and function of the aminoacyl-tRNA binding site.</text>
</comment>
<comment type="similarity">
    <text evidence="1">Belongs to the bacterial ribosomal protein bL19 family.</text>
</comment>
<gene>
    <name evidence="1" type="primary">rplS</name>
    <name type="ordered locus">KRH_10660</name>
</gene>
<dbReference type="EMBL" id="AP009152">
    <property type="protein sequence ID" value="BAG29413.1"/>
    <property type="molecule type" value="Genomic_DNA"/>
</dbReference>
<dbReference type="RefSeq" id="WP_012398134.1">
    <property type="nucleotide sequence ID" value="NZ_VECX01000005.1"/>
</dbReference>
<dbReference type="SMR" id="B2GFY5"/>
<dbReference type="STRING" id="378753.KRH_10660"/>
<dbReference type="KEGG" id="krh:KRH_10660"/>
<dbReference type="eggNOG" id="COG0335">
    <property type="taxonomic scope" value="Bacteria"/>
</dbReference>
<dbReference type="HOGENOM" id="CLU_103507_2_2_11"/>
<dbReference type="OrthoDB" id="9803541at2"/>
<dbReference type="Proteomes" id="UP000008838">
    <property type="component" value="Chromosome"/>
</dbReference>
<dbReference type="GO" id="GO:0022625">
    <property type="term" value="C:cytosolic large ribosomal subunit"/>
    <property type="evidence" value="ECO:0007669"/>
    <property type="project" value="TreeGrafter"/>
</dbReference>
<dbReference type="GO" id="GO:0003735">
    <property type="term" value="F:structural constituent of ribosome"/>
    <property type="evidence" value="ECO:0007669"/>
    <property type="project" value="InterPro"/>
</dbReference>
<dbReference type="GO" id="GO:0006412">
    <property type="term" value="P:translation"/>
    <property type="evidence" value="ECO:0007669"/>
    <property type="project" value="UniProtKB-UniRule"/>
</dbReference>
<dbReference type="FunFam" id="2.30.30.790:FF:000001">
    <property type="entry name" value="50S ribosomal protein L19"/>
    <property type="match status" value="1"/>
</dbReference>
<dbReference type="Gene3D" id="2.30.30.790">
    <property type="match status" value="1"/>
</dbReference>
<dbReference type="HAMAP" id="MF_00402">
    <property type="entry name" value="Ribosomal_bL19"/>
    <property type="match status" value="1"/>
</dbReference>
<dbReference type="InterPro" id="IPR001857">
    <property type="entry name" value="Ribosomal_bL19"/>
</dbReference>
<dbReference type="InterPro" id="IPR018257">
    <property type="entry name" value="Ribosomal_bL19_CS"/>
</dbReference>
<dbReference type="InterPro" id="IPR038657">
    <property type="entry name" value="Ribosomal_bL19_sf"/>
</dbReference>
<dbReference type="InterPro" id="IPR008991">
    <property type="entry name" value="Translation_prot_SH3-like_sf"/>
</dbReference>
<dbReference type="NCBIfam" id="TIGR01024">
    <property type="entry name" value="rplS_bact"/>
    <property type="match status" value="1"/>
</dbReference>
<dbReference type="PANTHER" id="PTHR15680:SF9">
    <property type="entry name" value="LARGE RIBOSOMAL SUBUNIT PROTEIN BL19M"/>
    <property type="match status" value="1"/>
</dbReference>
<dbReference type="PANTHER" id="PTHR15680">
    <property type="entry name" value="RIBOSOMAL PROTEIN L19"/>
    <property type="match status" value="1"/>
</dbReference>
<dbReference type="Pfam" id="PF01245">
    <property type="entry name" value="Ribosomal_L19"/>
    <property type="match status" value="1"/>
</dbReference>
<dbReference type="PIRSF" id="PIRSF002191">
    <property type="entry name" value="Ribosomal_L19"/>
    <property type="match status" value="1"/>
</dbReference>
<dbReference type="PRINTS" id="PR00061">
    <property type="entry name" value="RIBOSOMALL19"/>
</dbReference>
<dbReference type="SUPFAM" id="SSF50104">
    <property type="entry name" value="Translation proteins SH3-like domain"/>
    <property type="match status" value="1"/>
</dbReference>
<dbReference type="PROSITE" id="PS01015">
    <property type="entry name" value="RIBOSOMAL_L19"/>
    <property type="match status" value="1"/>
</dbReference>
<sequence length="120" mass="13643">MNILDQLDAKSLRDDVPDFRPGDTLNVHVNIVEGNRSRVQVFKGFVMGRQGSGVRETFTVRKVSFGVGVERTFPVHSPIIDKIELVSRGDVRRAKLYYMRDRHGKAARIREKRESSASSK</sequence>
<reference key="1">
    <citation type="journal article" date="2008" name="J. Bacteriol.">
        <title>Complete genome sequence of the soil actinomycete Kocuria rhizophila.</title>
        <authorList>
            <person name="Takarada H."/>
            <person name="Sekine M."/>
            <person name="Kosugi H."/>
            <person name="Matsuo Y."/>
            <person name="Fujisawa T."/>
            <person name="Omata S."/>
            <person name="Kishi E."/>
            <person name="Shimizu A."/>
            <person name="Tsukatani N."/>
            <person name="Tanikawa S."/>
            <person name="Fujita N."/>
            <person name="Harayama S."/>
        </authorList>
    </citation>
    <scope>NUCLEOTIDE SEQUENCE [LARGE SCALE GENOMIC DNA]</scope>
    <source>
        <strain>ATCC 9341 / DSM 348 / NBRC 103217 / DC2201</strain>
    </source>
</reference>
<evidence type="ECO:0000255" key="1">
    <source>
        <dbReference type="HAMAP-Rule" id="MF_00402"/>
    </source>
</evidence>
<evidence type="ECO:0000305" key="2"/>
<organism>
    <name type="scientific">Kocuria rhizophila (strain ATCC 9341 / DSM 348 / NBRC 103217 / DC2201)</name>
    <dbReference type="NCBI Taxonomy" id="378753"/>
    <lineage>
        <taxon>Bacteria</taxon>
        <taxon>Bacillati</taxon>
        <taxon>Actinomycetota</taxon>
        <taxon>Actinomycetes</taxon>
        <taxon>Micrococcales</taxon>
        <taxon>Micrococcaceae</taxon>
        <taxon>Kocuria</taxon>
    </lineage>
</organism>
<feature type="chain" id="PRO_1000193853" description="Large ribosomal subunit protein bL19">
    <location>
        <begin position="1"/>
        <end position="120"/>
    </location>
</feature>
<protein>
    <recommendedName>
        <fullName evidence="1">Large ribosomal subunit protein bL19</fullName>
    </recommendedName>
    <alternativeName>
        <fullName evidence="2">50S ribosomal protein L19</fullName>
    </alternativeName>
</protein>
<proteinExistence type="inferred from homology"/>
<name>RL19_KOCRD</name>
<accession>B2GFY5</accession>